<keyword id="KW-0030">Aminoacyl-tRNA synthetase</keyword>
<keyword id="KW-0067">ATP-binding</keyword>
<keyword id="KW-0963">Cytoplasm</keyword>
<keyword id="KW-0436">Ligase</keyword>
<keyword id="KW-0547">Nucleotide-binding</keyword>
<keyword id="KW-0648">Protein biosynthesis</keyword>
<sequence>MRTSQYLLSTLKETPADAEVISHQLMLRAGMIRKLASGLYTWLPTGVRVLKKVENIVREEMNNAGAIEVSMPVVQPADLWQESGRWEQYGPELLRFVDRGERPFVLGPTHEEVITDLIRNELSSYKQLPLNFYQIQTKFRDEVRPRFGVMRSREFLMKDAYSFHTSQESLQETYDAMYAAYSKIFSRMGLDFRAVQADTGSIGGSASHEFQVLAQSGEDDVVFSDTSDYAANIELAEAIAPKEPRAAATQEMTLVDTPNAKTIAELVEQFNLPIEKTVKTLLVKAVEGSSFPQVALLVRGDHELNEVKAEKLPQVASPLTFATEEEIRAVVKAGPGSLGPVNMPIPVVIDRTVAAMSDFAAGANIDGKHYFGINWDRDVATPEVADIRNVVAGDPSPDGQGRLLIKRGIEVGHIFQLGTKYSEALKASVQGEDGRNQILTMGCYGIGVTRVVAAAIEQNYDERGIVWPDAIAPFQVAILPMNMHKSFRVQELAEKLYSELRAQGIEVLLDDRKERPGVMFADMELIGIPHTIVLGDRNLDNDDIEYKYRRNGEKQLIKTGDIVEYLVKQIKG</sequence>
<name>SYP_ECODH</name>
<gene>
    <name evidence="1" type="primary">proS</name>
    <name type="ordered locus">ECDH10B_0175</name>
</gene>
<proteinExistence type="inferred from homology"/>
<evidence type="ECO:0000255" key="1">
    <source>
        <dbReference type="HAMAP-Rule" id="MF_01569"/>
    </source>
</evidence>
<protein>
    <recommendedName>
        <fullName evidence="1">Proline--tRNA ligase</fullName>
        <ecNumber evidence="1">6.1.1.15</ecNumber>
    </recommendedName>
    <alternativeName>
        <fullName evidence="1">Prolyl-tRNA synthetase</fullName>
        <shortName evidence="1">ProRS</shortName>
    </alternativeName>
</protein>
<comment type="function">
    <text evidence="1">Catalyzes the attachment of proline to tRNA(Pro) in a two-step reaction: proline is first activated by ATP to form Pro-AMP and then transferred to the acceptor end of tRNA(Pro). As ProRS can inadvertently accommodate and process non-cognate amino acids such as alanine and cysteine, to avoid such errors it has two additional distinct editing activities against alanine. One activity is designated as 'pretransfer' editing and involves the tRNA(Pro)-independent hydrolysis of activated Ala-AMP. The other activity is designated 'posttransfer' editing and involves deacylation of mischarged Ala-tRNA(Pro). The misacylated Cys-tRNA(Pro) is not edited by ProRS.</text>
</comment>
<comment type="catalytic activity">
    <reaction evidence="1">
        <text>tRNA(Pro) + L-proline + ATP = L-prolyl-tRNA(Pro) + AMP + diphosphate</text>
        <dbReference type="Rhea" id="RHEA:14305"/>
        <dbReference type="Rhea" id="RHEA-COMP:9700"/>
        <dbReference type="Rhea" id="RHEA-COMP:9702"/>
        <dbReference type="ChEBI" id="CHEBI:30616"/>
        <dbReference type="ChEBI" id="CHEBI:33019"/>
        <dbReference type="ChEBI" id="CHEBI:60039"/>
        <dbReference type="ChEBI" id="CHEBI:78442"/>
        <dbReference type="ChEBI" id="CHEBI:78532"/>
        <dbReference type="ChEBI" id="CHEBI:456215"/>
        <dbReference type="EC" id="6.1.1.15"/>
    </reaction>
</comment>
<comment type="subunit">
    <text evidence="1">Homodimer.</text>
</comment>
<comment type="subcellular location">
    <subcellularLocation>
        <location evidence="1">Cytoplasm</location>
    </subcellularLocation>
</comment>
<comment type="domain">
    <text evidence="1">Consists of three domains: the N-terminal catalytic domain, the editing domain and the C-terminal anticodon-binding domain.</text>
</comment>
<comment type="similarity">
    <text evidence="1">Belongs to the class-II aminoacyl-tRNA synthetase family. ProS type 1 subfamily.</text>
</comment>
<reference key="1">
    <citation type="journal article" date="2008" name="J. Bacteriol.">
        <title>The complete genome sequence of Escherichia coli DH10B: insights into the biology of a laboratory workhorse.</title>
        <authorList>
            <person name="Durfee T."/>
            <person name="Nelson R."/>
            <person name="Baldwin S."/>
            <person name="Plunkett G. III"/>
            <person name="Burland V."/>
            <person name="Mau B."/>
            <person name="Petrosino J.F."/>
            <person name="Qin X."/>
            <person name="Muzny D.M."/>
            <person name="Ayele M."/>
            <person name="Gibbs R.A."/>
            <person name="Csorgo B."/>
            <person name="Posfai G."/>
            <person name="Weinstock G.M."/>
            <person name="Blattner F.R."/>
        </authorList>
    </citation>
    <scope>NUCLEOTIDE SEQUENCE [LARGE SCALE GENOMIC DNA]</scope>
    <source>
        <strain>K12 / DH10B</strain>
    </source>
</reference>
<dbReference type="EC" id="6.1.1.15" evidence="1"/>
<dbReference type="EMBL" id="CP000948">
    <property type="protein sequence ID" value="ACB01373.1"/>
    <property type="molecule type" value="Genomic_DNA"/>
</dbReference>
<dbReference type="RefSeq" id="WP_001260717.1">
    <property type="nucleotide sequence ID" value="NC_010473.1"/>
</dbReference>
<dbReference type="SMR" id="B1XD64"/>
<dbReference type="KEGG" id="ecd:ECDH10B_0175"/>
<dbReference type="HOGENOM" id="CLU_016739_0_0_6"/>
<dbReference type="GO" id="GO:0005829">
    <property type="term" value="C:cytosol"/>
    <property type="evidence" value="ECO:0007669"/>
    <property type="project" value="TreeGrafter"/>
</dbReference>
<dbReference type="GO" id="GO:0002161">
    <property type="term" value="F:aminoacyl-tRNA deacylase activity"/>
    <property type="evidence" value="ECO:0007669"/>
    <property type="project" value="InterPro"/>
</dbReference>
<dbReference type="GO" id="GO:0005524">
    <property type="term" value="F:ATP binding"/>
    <property type="evidence" value="ECO:0007669"/>
    <property type="project" value="UniProtKB-UniRule"/>
</dbReference>
<dbReference type="GO" id="GO:0004827">
    <property type="term" value="F:proline-tRNA ligase activity"/>
    <property type="evidence" value="ECO:0007669"/>
    <property type="project" value="UniProtKB-UniRule"/>
</dbReference>
<dbReference type="GO" id="GO:0006433">
    <property type="term" value="P:prolyl-tRNA aminoacylation"/>
    <property type="evidence" value="ECO:0007669"/>
    <property type="project" value="UniProtKB-UniRule"/>
</dbReference>
<dbReference type="CDD" id="cd04334">
    <property type="entry name" value="ProRS-INS"/>
    <property type="match status" value="1"/>
</dbReference>
<dbReference type="CDD" id="cd00861">
    <property type="entry name" value="ProRS_anticodon_short"/>
    <property type="match status" value="1"/>
</dbReference>
<dbReference type="CDD" id="cd00779">
    <property type="entry name" value="ProRS_core_prok"/>
    <property type="match status" value="1"/>
</dbReference>
<dbReference type="FunFam" id="3.30.930.10:FF:000012">
    <property type="entry name" value="Proline--tRNA ligase"/>
    <property type="match status" value="1"/>
</dbReference>
<dbReference type="FunFam" id="3.30.930.10:FF:000097">
    <property type="entry name" value="Proline--tRNA ligase"/>
    <property type="match status" value="1"/>
</dbReference>
<dbReference type="FunFam" id="3.40.50.800:FF:000006">
    <property type="entry name" value="Proline--tRNA ligase"/>
    <property type="match status" value="1"/>
</dbReference>
<dbReference type="FunFam" id="3.90.960.10:FF:000001">
    <property type="entry name" value="Proline--tRNA ligase"/>
    <property type="match status" value="1"/>
</dbReference>
<dbReference type="Gene3D" id="3.40.50.800">
    <property type="entry name" value="Anticodon-binding domain"/>
    <property type="match status" value="1"/>
</dbReference>
<dbReference type="Gene3D" id="3.30.930.10">
    <property type="entry name" value="Bira Bifunctional Protein, Domain 2"/>
    <property type="match status" value="2"/>
</dbReference>
<dbReference type="Gene3D" id="3.90.960.10">
    <property type="entry name" value="YbaK/aminoacyl-tRNA synthetase-associated domain"/>
    <property type="match status" value="1"/>
</dbReference>
<dbReference type="HAMAP" id="MF_01569">
    <property type="entry name" value="Pro_tRNA_synth_type1"/>
    <property type="match status" value="1"/>
</dbReference>
<dbReference type="InterPro" id="IPR002314">
    <property type="entry name" value="aa-tRNA-synt_IIb"/>
</dbReference>
<dbReference type="InterPro" id="IPR006195">
    <property type="entry name" value="aa-tRNA-synth_II"/>
</dbReference>
<dbReference type="InterPro" id="IPR045864">
    <property type="entry name" value="aa-tRNA-synth_II/BPL/LPL"/>
</dbReference>
<dbReference type="InterPro" id="IPR004154">
    <property type="entry name" value="Anticodon-bd"/>
</dbReference>
<dbReference type="InterPro" id="IPR036621">
    <property type="entry name" value="Anticodon-bd_dom_sf"/>
</dbReference>
<dbReference type="InterPro" id="IPR002316">
    <property type="entry name" value="Pro-tRNA-ligase_IIa"/>
</dbReference>
<dbReference type="InterPro" id="IPR004500">
    <property type="entry name" value="Pro-tRNA-synth_IIa_bac-type"/>
</dbReference>
<dbReference type="InterPro" id="IPR023717">
    <property type="entry name" value="Pro-tRNA-Synthase_IIa_type1"/>
</dbReference>
<dbReference type="InterPro" id="IPR050062">
    <property type="entry name" value="Pro-tRNA_synthetase"/>
</dbReference>
<dbReference type="InterPro" id="IPR044140">
    <property type="entry name" value="ProRS_anticodon_short"/>
</dbReference>
<dbReference type="InterPro" id="IPR033730">
    <property type="entry name" value="ProRS_core_prok"/>
</dbReference>
<dbReference type="InterPro" id="IPR036754">
    <property type="entry name" value="YbaK/aa-tRNA-synt-asso_dom_sf"/>
</dbReference>
<dbReference type="InterPro" id="IPR007214">
    <property type="entry name" value="YbaK/aa-tRNA-synth-assoc-dom"/>
</dbReference>
<dbReference type="NCBIfam" id="NF006625">
    <property type="entry name" value="PRK09194.1"/>
    <property type="match status" value="1"/>
</dbReference>
<dbReference type="NCBIfam" id="TIGR00409">
    <property type="entry name" value="proS_fam_II"/>
    <property type="match status" value="1"/>
</dbReference>
<dbReference type="PANTHER" id="PTHR42753">
    <property type="entry name" value="MITOCHONDRIAL RIBOSOME PROTEIN L39/PROLYL-TRNA LIGASE FAMILY MEMBER"/>
    <property type="match status" value="1"/>
</dbReference>
<dbReference type="PANTHER" id="PTHR42753:SF2">
    <property type="entry name" value="PROLINE--TRNA LIGASE"/>
    <property type="match status" value="1"/>
</dbReference>
<dbReference type="Pfam" id="PF03129">
    <property type="entry name" value="HGTP_anticodon"/>
    <property type="match status" value="1"/>
</dbReference>
<dbReference type="Pfam" id="PF00587">
    <property type="entry name" value="tRNA-synt_2b"/>
    <property type="match status" value="1"/>
</dbReference>
<dbReference type="Pfam" id="PF04073">
    <property type="entry name" value="tRNA_edit"/>
    <property type="match status" value="1"/>
</dbReference>
<dbReference type="PIRSF" id="PIRSF001535">
    <property type="entry name" value="ProRS_1"/>
    <property type="match status" value="1"/>
</dbReference>
<dbReference type="PRINTS" id="PR01046">
    <property type="entry name" value="TRNASYNTHPRO"/>
</dbReference>
<dbReference type="SUPFAM" id="SSF52954">
    <property type="entry name" value="Class II aaRS ABD-related"/>
    <property type="match status" value="1"/>
</dbReference>
<dbReference type="SUPFAM" id="SSF55681">
    <property type="entry name" value="Class II aaRS and biotin synthetases"/>
    <property type="match status" value="1"/>
</dbReference>
<dbReference type="SUPFAM" id="SSF55826">
    <property type="entry name" value="YbaK/ProRS associated domain"/>
    <property type="match status" value="1"/>
</dbReference>
<dbReference type="PROSITE" id="PS50862">
    <property type="entry name" value="AA_TRNA_LIGASE_II"/>
    <property type="match status" value="1"/>
</dbReference>
<organism>
    <name type="scientific">Escherichia coli (strain K12 / DH10B)</name>
    <dbReference type="NCBI Taxonomy" id="316385"/>
    <lineage>
        <taxon>Bacteria</taxon>
        <taxon>Pseudomonadati</taxon>
        <taxon>Pseudomonadota</taxon>
        <taxon>Gammaproteobacteria</taxon>
        <taxon>Enterobacterales</taxon>
        <taxon>Enterobacteriaceae</taxon>
        <taxon>Escherichia</taxon>
    </lineage>
</organism>
<accession>B1XD64</accession>
<feature type="chain" id="PRO_1000199377" description="Proline--tRNA ligase">
    <location>
        <begin position="1"/>
        <end position="572"/>
    </location>
</feature>